<accession>Q9U3U0</accession>
<name>RLA0_CERCA</name>
<reference key="1">
    <citation type="journal article" date="2000" name="Insect Mol. Biol.">
        <title>Cloning and characterization of the ribosomal protein CcP0 of the medfly Ceratitis capitata.</title>
        <authorList>
            <person name="Gagou M.E."/>
            <person name="Ballesta J.P.G."/>
            <person name="Kouyanou S.M."/>
        </authorList>
    </citation>
    <scope>NUCLEOTIDE SEQUENCE [GENOMIC DNA]</scope>
</reference>
<sequence length="317" mass="33948">MVRENKAAWKAQYFLKVVELFDEYPKCFIVGADNVGSKQMQNIRTSLRGLGVVLMGKNTMMRKAIRGHLENNAQLEKLLPHIKGNVGFVFTKGDLAEVRDKLLESKVRAPARAGAIAPLPVIIPAQNTGLGPEKTSFFQALSIPTKISKGTIEIINDVPILKPGDKVGASEATLLNMLNISPFSYGLAITQVYDSGSIFSPEILDIKPEDLRAKFQAGVANLAAVSLQIGYPTIASAPHSIANGFKNLLAIAASTEVEFKQAATIKEFIKDPSKFVAAAAASAPAAGAGAAAEKKEEAKKEESESEEDDDMGFGLFD</sequence>
<feature type="chain" id="PRO_0000154767" description="Large ribosomal subunit protein uL10">
    <location>
        <begin position="1"/>
        <end position="317"/>
    </location>
</feature>
<feature type="region of interest" description="Disordered" evidence="2">
    <location>
        <begin position="286"/>
        <end position="317"/>
    </location>
</feature>
<feature type="compositionally biased region" description="Basic and acidic residues" evidence="2">
    <location>
        <begin position="292"/>
        <end position="302"/>
    </location>
</feature>
<organism>
    <name type="scientific">Ceratitis capitata</name>
    <name type="common">Mediterranean fruit fly</name>
    <name type="synonym">Tephritis capitata</name>
    <dbReference type="NCBI Taxonomy" id="7213"/>
    <lineage>
        <taxon>Eukaryota</taxon>
        <taxon>Metazoa</taxon>
        <taxon>Ecdysozoa</taxon>
        <taxon>Arthropoda</taxon>
        <taxon>Hexapoda</taxon>
        <taxon>Insecta</taxon>
        <taxon>Pterygota</taxon>
        <taxon>Neoptera</taxon>
        <taxon>Endopterygota</taxon>
        <taxon>Diptera</taxon>
        <taxon>Brachycera</taxon>
        <taxon>Muscomorpha</taxon>
        <taxon>Tephritoidea</taxon>
        <taxon>Tephritidae</taxon>
        <taxon>Ceratitis</taxon>
        <taxon>Ceratitis</taxon>
    </lineage>
</organism>
<comment type="function">
    <text>Ribosomal protein P0 is the functional equivalent of E.coli protein L10.</text>
</comment>
<comment type="subunit">
    <text>P0 forms a pentameric complex by interaction with dimers of P1 and P2.</text>
</comment>
<comment type="PTM">
    <text evidence="1">Phosphorylated.</text>
</comment>
<comment type="similarity">
    <text evidence="3">Belongs to the universal ribosomal protein uL10 family.</text>
</comment>
<protein>
    <recommendedName>
        <fullName evidence="3">Large ribosomal subunit protein uL10</fullName>
    </recommendedName>
    <alternativeName>
        <fullName>60S acidic ribosomal protein P0</fullName>
        <shortName>CcP0</shortName>
    </alternativeName>
</protein>
<proteinExistence type="inferred from homology"/>
<keyword id="KW-0597">Phosphoprotein</keyword>
<keyword id="KW-0687">Ribonucleoprotein</keyword>
<keyword id="KW-0689">Ribosomal protein</keyword>
<dbReference type="EMBL" id="Y18444">
    <property type="protein sequence ID" value="CAB63647.1"/>
    <property type="molecule type" value="Genomic_DNA"/>
</dbReference>
<dbReference type="SMR" id="Q9U3U0"/>
<dbReference type="EnsemblMetazoa" id="XM_004522274.3">
    <property type="protein sequence ID" value="XP_004522331.1"/>
    <property type="gene ID" value="LOC101458794"/>
</dbReference>
<dbReference type="GeneID" id="101458794"/>
<dbReference type="KEGG" id="ccat:101458794"/>
<dbReference type="CTD" id="6175"/>
<dbReference type="OrthoDB" id="10259902at2759"/>
<dbReference type="GO" id="GO:0022625">
    <property type="term" value="C:cytosolic large ribosomal subunit"/>
    <property type="evidence" value="ECO:0007669"/>
    <property type="project" value="TreeGrafter"/>
</dbReference>
<dbReference type="GO" id="GO:0070180">
    <property type="term" value="F:large ribosomal subunit rRNA binding"/>
    <property type="evidence" value="ECO:0007669"/>
    <property type="project" value="TreeGrafter"/>
</dbReference>
<dbReference type="GO" id="GO:0003735">
    <property type="term" value="F:structural constituent of ribosome"/>
    <property type="evidence" value="ECO:0007669"/>
    <property type="project" value="TreeGrafter"/>
</dbReference>
<dbReference type="GO" id="GO:0002181">
    <property type="term" value="P:cytoplasmic translation"/>
    <property type="evidence" value="ECO:0007669"/>
    <property type="project" value="TreeGrafter"/>
</dbReference>
<dbReference type="GO" id="GO:0000027">
    <property type="term" value="P:ribosomal large subunit assembly"/>
    <property type="evidence" value="ECO:0007669"/>
    <property type="project" value="TreeGrafter"/>
</dbReference>
<dbReference type="CDD" id="cd05795">
    <property type="entry name" value="Ribosomal_P0_L10e"/>
    <property type="match status" value="1"/>
</dbReference>
<dbReference type="FunFam" id="3.30.70.1730:FF:000002">
    <property type="entry name" value="60S acidic ribosomal protein P0"/>
    <property type="match status" value="1"/>
</dbReference>
<dbReference type="FunFam" id="3.90.105.20:FF:000001">
    <property type="entry name" value="60S acidic ribosomal protein P0"/>
    <property type="match status" value="1"/>
</dbReference>
<dbReference type="Gene3D" id="3.30.70.1730">
    <property type="match status" value="1"/>
</dbReference>
<dbReference type="Gene3D" id="3.90.105.20">
    <property type="match status" value="1"/>
</dbReference>
<dbReference type="InterPro" id="IPR050323">
    <property type="entry name" value="Ribosomal_protein_uL10"/>
</dbReference>
<dbReference type="InterPro" id="IPR001790">
    <property type="entry name" value="Ribosomal_uL10"/>
</dbReference>
<dbReference type="InterPro" id="IPR040637">
    <property type="entry name" value="Ribosomal_uL10-like_insert"/>
</dbReference>
<dbReference type="InterPro" id="IPR043164">
    <property type="entry name" value="Ribosomal_uL10-like_insert_sf"/>
</dbReference>
<dbReference type="InterPro" id="IPR043141">
    <property type="entry name" value="Ribosomal_uL10-like_sf"/>
</dbReference>
<dbReference type="InterPro" id="IPR030670">
    <property type="entry name" value="uL10_eukaryotes"/>
</dbReference>
<dbReference type="PANTHER" id="PTHR45699">
    <property type="entry name" value="60S ACIDIC RIBOSOMAL PROTEIN P0"/>
    <property type="match status" value="1"/>
</dbReference>
<dbReference type="PANTHER" id="PTHR45699:SF3">
    <property type="entry name" value="LARGE RIBOSOMAL SUBUNIT PROTEIN UL10"/>
    <property type="match status" value="1"/>
</dbReference>
<dbReference type="Pfam" id="PF00428">
    <property type="entry name" value="Ribosomal_60s"/>
    <property type="match status" value="1"/>
</dbReference>
<dbReference type="Pfam" id="PF00466">
    <property type="entry name" value="Ribosomal_L10"/>
    <property type="match status" value="1"/>
</dbReference>
<dbReference type="Pfam" id="PF17777">
    <property type="entry name" value="RL10P_insert"/>
    <property type="match status" value="1"/>
</dbReference>
<dbReference type="PIRSF" id="PIRSF039087">
    <property type="entry name" value="L10E"/>
    <property type="match status" value="1"/>
</dbReference>
<dbReference type="SUPFAM" id="SSF160369">
    <property type="entry name" value="Ribosomal protein L10-like"/>
    <property type="match status" value="1"/>
</dbReference>
<evidence type="ECO:0000250" key="1"/>
<evidence type="ECO:0000256" key="2">
    <source>
        <dbReference type="SAM" id="MobiDB-lite"/>
    </source>
</evidence>
<evidence type="ECO:0000305" key="3"/>
<gene>
    <name type="primary">RpLP0</name>
    <name type="synonym">RpP0</name>
</gene>